<sequence length="121" mass="13063">MTVKINTKDGLIELSDDVIATVVGGSATEIFGVVGMASKSAIKDNFQSLLRKENYAKGVVVKSTDLGISVDVYTVMSYGVKISEVSKNIQERVKFNLESQLGLTADMVNVYVQNIKVVGEN</sequence>
<protein>
    <recommendedName>
        <fullName>Uncharacterized protein Spy1614</fullName>
    </recommendedName>
</protein>
<comment type="mass spectrometry" mass="13063.04" method="Electrospray" evidence="2"/>
<comment type="similarity">
    <text evidence="1">Belongs to the asp23 family.</text>
</comment>
<reference evidence="4" key="1">
    <citation type="journal article" date="2004" name="J. Infect. Dis.">
        <title>Progress toward characterization of the group A Streptococcus metagenome: complete genome sequence of a macrolide-resistant serotype M6 strain.</title>
        <authorList>
            <person name="Banks D.J."/>
            <person name="Porcella S.F."/>
            <person name="Barbian K.D."/>
            <person name="Beres S.B."/>
            <person name="Philips L.E."/>
            <person name="Voyich J.M."/>
            <person name="DeLeo F.R."/>
            <person name="Martin J.M."/>
            <person name="Somerville G.A."/>
            <person name="Musser J.M."/>
        </authorList>
    </citation>
    <scope>NUCLEOTIDE SEQUENCE [LARGE SCALE GENOMIC DNA]</scope>
    <source>
        <strain>ATCC BAA-946 / MGAS10394</strain>
    </source>
</reference>
<reference evidence="3" key="2">
    <citation type="submission" date="2000-05" db="UniProtKB">
        <title>Two-dimensional gel electrophoresis map of Streptococcus pyogenes proteins.</title>
        <authorList>
            <person name="Hogan D.A."/>
            <person name="Du P."/>
            <person name="Stevenson T.I."/>
            <person name="Whitton M."/>
            <person name="Kilby G.W."/>
            <person name="Rogers J."/>
            <person name="VanBogelen R.A."/>
        </authorList>
    </citation>
    <scope>PROTEIN SEQUENCE OF 44-51 AND 93-116</scope>
    <scope>MASS SPECTROMETRY</scope>
    <source>
        <strain evidence="2">JRS4 / Serotype M6</strain>
    </source>
</reference>
<accession>Q5XA14</accession>
<accession>P82587</accession>
<keyword id="KW-0903">Direct protein sequencing</keyword>
<dbReference type="EMBL" id="CP000003">
    <property type="protein sequence ID" value="AAT87749.1"/>
    <property type="molecule type" value="Genomic_DNA"/>
</dbReference>
<dbReference type="RefSeq" id="WP_002982874.1">
    <property type="nucleotide sequence ID" value="NC_006086.1"/>
</dbReference>
<dbReference type="SMR" id="Q5XA14"/>
<dbReference type="KEGG" id="spa:M6_Spy1614"/>
<dbReference type="HOGENOM" id="CLU_113198_2_0_9"/>
<dbReference type="Proteomes" id="UP000001167">
    <property type="component" value="Chromosome"/>
</dbReference>
<dbReference type="InterPro" id="IPR005531">
    <property type="entry name" value="Asp23"/>
</dbReference>
<dbReference type="PANTHER" id="PTHR34297:SF2">
    <property type="entry name" value="ASP23_GLS24 FAMILY ENVELOPE STRESS RESPONSE PROTEIN"/>
    <property type="match status" value="1"/>
</dbReference>
<dbReference type="PANTHER" id="PTHR34297">
    <property type="entry name" value="HYPOTHETICAL CYTOSOLIC PROTEIN-RELATED"/>
    <property type="match status" value="1"/>
</dbReference>
<dbReference type="Pfam" id="PF03780">
    <property type="entry name" value="Asp23"/>
    <property type="match status" value="1"/>
</dbReference>
<gene>
    <name type="ordered locus">M6_Spy1614</name>
</gene>
<organism>
    <name type="scientific">Streptococcus pyogenes serotype M6 (strain ATCC BAA-946 / MGAS10394)</name>
    <dbReference type="NCBI Taxonomy" id="286636"/>
    <lineage>
        <taxon>Bacteria</taxon>
        <taxon>Bacillati</taxon>
        <taxon>Bacillota</taxon>
        <taxon>Bacilli</taxon>
        <taxon>Lactobacillales</taxon>
        <taxon>Streptococcaceae</taxon>
        <taxon>Streptococcus</taxon>
    </lineage>
</organism>
<name>Y1614_STRP6</name>
<feature type="chain" id="PRO_0000259997" description="Uncharacterized protein Spy1614">
    <location>
        <begin position="1"/>
        <end position="121"/>
    </location>
</feature>
<proteinExistence type="evidence at protein level"/>
<evidence type="ECO:0000255" key="1"/>
<evidence type="ECO:0000269" key="2">
    <source ref="2"/>
</evidence>
<evidence type="ECO:0000305" key="3"/>
<evidence type="ECO:0000312" key="4">
    <source>
        <dbReference type="EMBL" id="AAT87749.1"/>
    </source>
</evidence>